<feature type="chain" id="PRO_1000116085" description="Coproporphyrin III ferrochelatase">
    <location>
        <begin position="1"/>
        <end position="364"/>
    </location>
</feature>
<feature type="binding site" evidence="1">
    <location>
        <position position="29"/>
    </location>
    <ligand>
        <name>Fe-coproporphyrin III</name>
        <dbReference type="ChEBI" id="CHEBI:68438"/>
    </ligand>
</feature>
<feature type="binding site" evidence="1">
    <location>
        <position position="118"/>
    </location>
    <ligand>
        <name>Fe-coproporphyrin III</name>
        <dbReference type="ChEBI" id="CHEBI:68438"/>
    </ligand>
</feature>
<feature type="binding site" evidence="1">
    <location>
        <position position="169"/>
    </location>
    <ligand>
        <name>Fe(2+)</name>
        <dbReference type="ChEBI" id="CHEBI:29033"/>
    </ligand>
</feature>
<feature type="binding site" evidence="1">
    <location>
        <position position="250"/>
    </location>
    <ligand>
        <name>Fe(2+)</name>
        <dbReference type="ChEBI" id="CHEBI:29033"/>
    </ligand>
</feature>
<proteinExistence type="inferred from homology"/>
<dbReference type="EC" id="4.99.1.9" evidence="1"/>
<dbReference type="EMBL" id="CP001033">
    <property type="protein sequence ID" value="ACB90237.1"/>
    <property type="molecule type" value="Genomic_DNA"/>
</dbReference>
<dbReference type="SMR" id="B2IPG3"/>
<dbReference type="KEGG" id="spw:SPCG_0985"/>
<dbReference type="HOGENOM" id="CLU_018884_2_1_9"/>
<dbReference type="UniPathway" id="UPA00252"/>
<dbReference type="GO" id="GO:0005737">
    <property type="term" value="C:cytoplasm"/>
    <property type="evidence" value="ECO:0007669"/>
    <property type="project" value="UniProtKB-SubCell"/>
</dbReference>
<dbReference type="GO" id="GO:0004325">
    <property type="term" value="F:ferrochelatase activity"/>
    <property type="evidence" value="ECO:0007669"/>
    <property type="project" value="UniProtKB-UniRule"/>
</dbReference>
<dbReference type="GO" id="GO:0046872">
    <property type="term" value="F:metal ion binding"/>
    <property type="evidence" value="ECO:0007669"/>
    <property type="project" value="UniProtKB-KW"/>
</dbReference>
<dbReference type="GO" id="GO:0006783">
    <property type="term" value="P:heme biosynthetic process"/>
    <property type="evidence" value="ECO:0007669"/>
    <property type="project" value="UniProtKB-UniRule"/>
</dbReference>
<dbReference type="CDD" id="cd00419">
    <property type="entry name" value="Ferrochelatase_C"/>
    <property type="match status" value="1"/>
</dbReference>
<dbReference type="CDD" id="cd03411">
    <property type="entry name" value="Ferrochelatase_N"/>
    <property type="match status" value="1"/>
</dbReference>
<dbReference type="FunFam" id="3.40.50.1400:FF:000007">
    <property type="entry name" value="Ferrochelatase"/>
    <property type="match status" value="1"/>
</dbReference>
<dbReference type="Gene3D" id="3.40.50.1400">
    <property type="match status" value="2"/>
</dbReference>
<dbReference type="HAMAP" id="MF_00323">
    <property type="entry name" value="Ferrochelatase"/>
    <property type="match status" value="1"/>
</dbReference>
<dbReference type="InterPro" id="IPR001015">
    <property type="entry name" value="Ferrochelatase"/>
</dbReference>
<dbReference type="InterPro" id="IPR019772">
    <property type="entry name" value="Ferrochelatase_AS"/>
</dbReference>
<dbReference type="InterPro" id="IPR033644">
    <property type="entry name" value="Ferrochelatase_C"/>
</dbReference>
<dbReference type="InterPro" id="IPR033659">
    <property type="entry name" value="Ferrochelatase_N"/>
</dbReference>
<dbReference type="NCBIfam" id="TIGR00109">
    <property type="entry name" value="hemH"/>
    <property type="match status" value="1"/>
</dbReference>
<dbReference type="PANTHER" id="PTHR11108">
    <property type="entry name" value="FERROCHELATASE"/>
    <property type="match status" value="1"/>
</dbReference>
<dbReference type="PANTHER" id="PTHR11108:SF1">
    <property type="entry name" value="FERROCHELATASE, MITOCHONDRIAL"/>
    <property type="match status" value="1"/>
</dbReference>
<dbReference type="Pfam" id="PF00762">
    <property type="entry name" value="Ferrochelatase"/>
    <property type="match status" value="1"/>
</dbReference>
<dbReference type="SUPFAM" id="SSF53800">
    <property type="entry name" value="Chelatase"/>
    <property type="match status" value="1"/>
</dbReference>
<dbReference type="PROSITE" id="PS00534">
    <property type="entry name" value="FERROCHELATASE"/>
    <property type="match status" value="1"/>
</dbReference>
<protein>
    <recommendedName>
        <fullName evidence="1">Coproporphyrin III ferrochelatase</fullName>
        <ecNumber evidence="1">4.99.1.9</ecNumber>
    </recommendedName>
</protein>
<name>CPFC_STRPS</name>
<gene>
    <name evidence="1" type="primary">cpfC</name>
    <name type="ordered locus">SPCG_0985</name>
</gene>
<reference key="1">
    <citation type="journal article" date="2009" name="BMC Genomics">
        <title>Genome evolution driven by host adaptations results in a more virulent and antimicrobial-resistant Streptococcus pneumoniae serotype 14.</title>
        <authorList>
            <person name="Ding F."/>
            <person name="Tang P."/>
            <person name="Hsu M.-H."/>
            <person name="Cui P."/>
            <person name="Hu S."/>
            <person name="Yu J."/>
            <person name="Chiu C.-H."/>
        </authorList>
    </citation>
    <scope>NUCLEOTIDE SEQUENCE [LARGE SCALE GENOMIC DNA]</scope>
    <source>
        <strain>CGSP14</strain>
    </source>
</reference>
<comment type="function">
    <text evidence="1">Involved in coproporphyrin-dependent heme b biosynthesis. Catalyzes the insertion of ferrous iron into coproporphyrin III to form Fe-coproporphyrin III.</text>
</comment>
<comment type="catalytic activity">
    <reaction evidence="1">
        <text>Fe-coproporphyrin III + 2 H(+) = coproporphyrin III + Fe(2+)</text>
        <dbReference type="Rhea" id="RHEA:49572"/>
        <dbReference type="ChEBI" id="CHEBI:15378"/>
        <dbReference type="ChEBI" id="CHEBI:29033"/>
        <dbReference type="ChEBI" id="CHEBI:68438"/>
        <dbReference type="ChEBI" id="CHEBI:131725"/>
        <dbReference type="EC" id="4.99.1.9"/>
    </reaction>
    <physiologicalReaction direction="right-to-left" evidence="1">
        <dbReference type="Rhea" id="RHEA:49574"/>
    </physiologicalReaction>
</comment>
<comment type="pathway">
    <text evidence="1">Porphyrin-containing compound metabolism; protoheme biosynthesis.</text>
</comment>
<comment type="subcellular location">
    <subcellularLocation>
        <location evidence="1">Cytoplasm</location>
    </subcellularLocation>
</comment>
<comment type="similarity">
    <text evidence="1">Belongs to the ferrochelatase family.</text>
</comment>
<accession>B2IPG3</accession>
<evidence type="ECO:0000255" key="1">
    <source>
        <dbReference type="HAMAP-Rule" id="MF_00323"/>
    </source>
</evidence>
<sequence>MKKAILMMTFGSPEEITFEGVADFFTNIRRGVRPQDHEIQTLYDNYVRIGGTPLQKITRQEVALVEARLGNEYSVYFANKFSSPFIPDVIGQMEADGIEQCICLILEPHYSFYSVMGYEKFLESKQIQFLVIKDWYQEEALLNYWADEIAKILKEEVKQDSFKVIFSAHSVPIFALDFGDPYIDQIFENSKLVAEKLGLSSEQYTNTWQSESDIGIPWIKPDVLEYLREQTEHPDHYIFVPISFISEHIEVLFDNDVECYDLCQEFGVNYHRPPMPNTDSRLIDALVNTVRVNENQEFKEFLPEEETFDELVPSDETKNILAESEDLQMPEFVKKLIEKKGRENVKMPYLIKKMLEKAGKLPKE</sequence>
<organism>
    <name type="scientific">Streptococcus pneumoniae (strain CGSP14)</name>
    <dbReference type="NCBI Taxonomy" id="516950"/>
    <lineage>
        <taxon>Bacteria</taxon>
        <taxon>Bacillati</taxon>
        <taxon>Bacillota</taxon>
        <taxon>Bacilli</taxon>
        <taxon>Lactobacillales</taxon>
        <taxon>Streptococcaceae</taxon>
        <taxon>Streptococcus</taxon>
    </lineage>
</organism>
<keyword id="KW-0963">Cytoplasm</keyword>
<keyword id="KW-0350">Heme biosynthesis</keyword>
<keyword id="KW-0408">Iron</keyword>
<keyword id="KW-0456">Lyase</keyword>
<keyword id="KW-0479">Metal-binding</keyword>
<keyword id="KW-0627">Porphyrin biosynthesis</keyword>